<protein>
    <recommendedName>
        <fullName evidence="1">Glycerol-3-phosphate acyltransferase</fullName>
    </recommendedName>
    <alternativeName>
        <fullName evidence="1">Acyl-PO4 G3P acyltransferase</fullName>
    </alternativeName>
    <alternativeName>
        <fullName evidence="1">Acyl-phosphate--glycerol-3-phosphate acyltransferase</fullName>
    </alternativeName>
    <alternativeName>
        <fullName evidence="1">G3P acyltransferase</fullName>
        <shortName evidence="1">GPAT</shortName>
        <ecNumber evidence="1">2.3.1.275</ecNumber>
    </alternativeName>
    <alternativeName>
        <fullName evidence="1">Lysophosphatidic acid synthase</fullName>
        <shortName evidence="1">LPA synthase</shortName>
    </alternativeName>
</protein>
<gene>
    <name evidence="1" type="primary">plsY</name>
    <name type="ordered locus">Pput_0425</name>
</gene>
<dbReference type="EC" id="2.3.1.275" evidence="1"/>
<dbReference type="EMBL" id="CP000712">
    <property type="protein sequence ID" value="ABQ76595.1"/>
    <property type="molecule type" value="Genomic_DNA"/>
</dbReference>
<dbReference type="SMR" id="A5VXI5"/>
<dbReference type="KEGG" id="ppf:Pput_0425"/>
<dbReference type="eggNOG" id="COG0344">
    <property type="taxonomic scope" value="Bacteria"/>
</dbReference>
<dbReference type="HOGENOM" id="CLU_081254_0_0_6"/>
<dbReference type="UniPathway" id="UPA00085"/>
<dbReference type="GO" id="GO:0005886">
    <property type="term" value="C:plasma membrane"/>
    <property type="evidence" value="ECO:0007669"/>
    <property type="project" value="UniProtKB-SubCell"/>
</dbReference>
<dbReference type="GO" id="GO:0043772">
    <property type="term" value="F:acyl-phosphate glycerol-3-phosphate acyltransferase activity"/>
    <property type="evidence" value="ECO:0007669"/>
    <property type="project" value="UniProtKB-UniRule"/>
</dbReference>
<dbReference type="GO" id="GO:0008654">
    <property type="term" value="P:phospholipid biosynthetic process"/>
    <property type="evidence" value="ECO:0007669"/>
    <property type="project" value="UniProtKB-UniRule"/>
</dbReference>
<dbReference type="HAMAP" id="MF_01043">
    <property type="entry name" value="PlsY"/>
    <property type="match status" value="1"/>
</dbReference>
<dbReference type="InterPro" id="IPR003811">
    <property type="entry name" value="G3P_acylTferase_PlsY"/>
</dbReference>
<dbReference type="NCBIfam" id="TIGR00023">
    <property type="entry name" value="glycerol-3-phosphate 1-O-acyltransferase PlsY"/>
    <property type="match status" value="1"/>
</dbReference>
<dbReference type="PANTHER" id="PTHR30309:SF0">
    <property type="entry name" value="GLYCEROL-3-PHOSPHATE ACYLTRANSFERASE-RELATED"/>
    <property type="match status" value="1"/>
</dbReference>
<dbReference type="PANTHER" id="PTHR30309">
    <property type="entry name" value="INNER MEMBRANE PROTEIN YGIH"/>
    <property type="match status" value="1"/>
</dbReference>
<dbReference type="Pfam" id="PF02660">
    <property type="entry name" value="G3P_acyltransf"/>
    <property type="match status" value="1"/>
</dbReference>
<dbReference type="SMART" id="SM01207">
    <property type="entry name" value="G3P_acyltransf"/>
    <property type="match status" value="1"/>
</dbReference>
<accession>A5VXI5</accession>
<organism>
    <name type="scientific">Pseudomonas putida (strain ATCC 700007 / DSM 6899 / JCM 31910 / BCRC 17059 / LMG 24140 / F1)</name>
    <dbReference type="NCBI Taxonomy" id="351746"/>
    <lineage>
        <taxon>Bacteria</taxon>
        <taxon>Pseudomonadati</taxon>
        <taxon>Pseudomonadota</taxon>
        <taxon>Gammaproteobacteria</taxon>
        <taxon>Pseudomonadales</taxon>
        <taxon>Pseudomonadaceae</taxon>
        <taxon>Pseudomonas</taxon>
    </lineage>
</organism>
<comment type="function">
    <text evidence="1">Catalyzes the transfer of an acyl group from acyl-phosphate (acyl-PO(4)) to glycerol-3-phosphate (G3P) to form lysophosphatidic acid (LPA). This enzyme utilizes acyl-phosphate as fatty acyl donor, but not acyl-CoA or acyl-ACP.</text>
</comment>
<comment type="catalytic activity">
    <reaction evidence="1">
        <text>an acyl phosphate + sn-glycerol 3-phosphate = a 1-acyl-sn-glycero-3-phosphate + phosphate</text>
        <dbReference type="Rhea" id="RHEA:34075"/>
        <dbReference type="ChEBI" id="CHEBI:43474"/>
        <dbReference type="ChEBI" id="CHEBI:57597"/>
        <dbReference type="ChEBI" id="CHEBI:57970"/>
        <dbReference type="ChEBI" id="CHEBI:59918"/>
        <dbReference type="EC" id="2.3.1.275"/>
    </reaction>
</comment>
<comment type="pathway">
    <text evidence="1">Lipid metabolism; phospholipid metabolism.</text>
</comment>
<comment type="subunit">
    <text evidence="1">Probably interacts with PlsX.</text>
</comment>
<comment type="subcellular location">
    <subcellularLocation>
        <location evidence="1">Cell inner membrane</location>
        <topology evidence="1">Multi-pass membrane protein</topology>
    </subcellularLocation>
</comment>
<comment type="similarity">
    <text evidence="1">Belongs to the PlsY family.</text>
</comment>
<proteinExistence type="inferred from homology"/>
<evidence type="ECO:0000255" key="1">
    <source>
        <dbReference type="HAMAP-Rule" id="MF_01043"/>
    </source>
</evidence>
<feature type="chain" id="PRO_1000064211" description="Glycerol-3-phosphate acyltransferase">
    <location>
        <begin position="1"/>
        <end position="189"/>
    </location>
</feature>
<feature type="transmembrane region" description="Helical" evidence="1">
    <location>
        <begin position="1"/>
        <end position="21"/>
    </location>
</feature>
<feature type="transmembrane region" description="Helical" evidence="1">
    <location>
        <begin position="50"/>
        <end position="70"/>
    </location>
</feature>
<feature type="transmembrane region" description="Helical" evidence="1">
    <location>
        <begin position="77"/>
        <end position="97"/>
    </location>
</feature>
<feature type="transmembrane region" description="Helical" evidence="1">
    <location>
        <begin position="111"/>
        <end position="131"/>
    </location>
</feature>
<feature type="transmembrane region" description="Helical" evidence="1">
    <location>
        <begin position="151"/>
        <end position="171"/>
    </location>
</feature>
<sequence length="189" mass="20408">MFWLLALLAYLLGSLSFAIVLSRLSGSPDPRSSGSGNAGATNMLRLAGRKLAILTLLGDLCKGLLPVLLARVAGLDLHAQAWVGICAVLGHLFPLYFRFKGGKGVATAAGMLMGLYFPAALLAIGAWLLTFYLTRTSSLAALIATPLTLPLLAWREPEALLPISVLTVMIVWRHRNNLRDLFAGRERHF</sequence>
<name>PLSY_PSEP1</name>
<keyword id="KW-0997">Cell inner membrane</keyword>
<keyword id="KW-1003">Cell membrane</keyword>
<keyword id="KW-0444">Lipid biosynthesis</keyword>
<keyword id="KW-0443">Lipid metabolism</keyword>
<keyword id="KW-0472">Membrane</keyword>
<keyword id="KW-0594">Phospholipid biosynthesis</keyword>
<keyword id="KW-1208">Phospholipid metabolism</keyword>
<keyword id="KW-0808">Transferase</keyword>
<keyword id="KW-0812">Transmembrane</keyword>
<keyword id="KW-1133">Transmembrane helix</keyword>
<reference key="1">
    <citation type="submission" date="2007-05" db="EMBL/GenBank/DDBJ databases">
        <title>Complete sequence of Pseudomonas putida F1.</title>
        <authorList>
            <consortium name="US DOE Joint Genome Institute"/>
            <person name="Copeland A."/>
            <person name="Lucas S."/>
            <person name="Lapidus A."/>
            <person name="Barry K."/>
            <person name="Detter J.C."/>
            <person name="Glavina del Rio T."/>
            <person name="Hammon N."/>
            <person name="Israni S."/>
            <person name="Dalin E."/>
            <person name="Tice H."/>
            <person name="Pitluck S."/>
            <person name="Chain P."/>
            <person name="Malfatti S."/>
            <person name="Shin M."/>
            <person name="Vergez L."/>
            <person name="Schmutz J."/>
            <person name="Larimer F."/>
            <person name="Land M."/>
            <person name="Hauser L."/>
            <person name="Kyrpides N."/>
            <person name="Lykidis A."/>
            <person name="Parales R."/>
            <person name="Richardson P."/>
        </authorList>
    </citation>
    <scope>NUCLEOTIDE SEQUENCE [LARGE SCALE GENOMIC DNA]</scope>
    <source>
        <strain>ATCC 700007 / DSM 6899 / JCM 31910 / BCRC 17059 / LMG 24140 / F1</strain>
    </source>
</reference>